<dbReference type="EMBL" id="AC245166">
    <property type="status" value="NOT_ANNOTATED_CDS"/>
    <property type="molecule type" value="Genomic_DNA"/>
</dbReference>
<dbReference type="EMDB" id="EMD-39547"/>
<dbReference type="SMR" id="A0A0C4DH34"/>
<dbReference type="FunCoup" id="A0A0C4DH34">
    <property type="interactions" value="325"/>
</dbReference>
<dbReference type="IMGT_GENE-DB" id="IGHV4-28"/>
<dbReference type="BioMuta" id="IGHV4-28"/>
<dbReference type="MassIVE" id="A0A0C4DH34"/>
<dbReference type="Ensembl" id="ENST00000390612.3">
    <property type="protein sequence ID" value="ENSP00000375021.2"/>
    <property type="gene ID" value="ENSG00000211952.3"/>
</dbReference>
<dbReference type="Ensembl" id="ENST00000632719.1">
    <property type="protein sequence ID" value="ENSP00000488402.1"/>
    <property type="gene ID" value="ENSG00000282726.1"/>
</dbReference>
<dbReference type="AGR" id="HGNC:5645"/>
<dbReference type="GeneCards" id="IGHV4-28"/>
<dbReference type="HGNC" id="HGNC:5645">
    <property type="gene designation" value="IGHV4-28"/>
</dbReference>
<dbReference type="HPA" id="ENSG00000211952">
    <property type="expression patterns" value="Group enriched (intestine, lymphoid tissue, salivary gland, stomach, urinary bladder)"/>
</dbReference>
<dbReference type="neXtProt" id="NX_A0A0C4DH34"/>
<dbReference type="OpenTargets" id="ENSG00000211952"/>
<dbReference type="VEuPathDB" id="HostDB:ENSG00000211952"/>
<dbReference type="GeneTree" id="ENSGT01030000234536"/>
<dbReference type="HOGENOM" id="CLU_077975_5_0_1"/>
<dbReference type="InParanoid" id="A0A0C4DH34"/>
<dbReference type="OMA" id="WIGRIWY"/>
<dbReference type="OrthoDB" id="9536275at2759"/>
<dbReference type="PAN-GO" id="A0A0C4DH34">
    <property type="GO annotations" value="11 GO annotations based on evolutionary models"/>
</dbReference>
<dbReference type="PhylomeDB" id="A0A0C4DH34"/>
<dbReference type="ChiTaRS" id="IGHV4-28">
    <property type="organism name" value="human"/>
</dbReference>
<dbReference type="Pharos" id="A0A0C4DH34">
    <property type="development level" value="Tdark"/>
</dbReference>
<dbReference type="PRO" id="PR:A0A0C4DH34"/>
<dbReference type="Proteomes" id="UP000005640">
    <property type="component" value="Chromosome 14"/>
</dbReference>
<dbReference type="RNAct" id="A0A0C4DH34">
    <property type="molecule type" value="protein"/>
</dbReference>
<dbReference type="Bgee" id="ENSG00000211952">
    <property type="expression patterns" value="Expressed in rectum and 84 other cell types or tissues"/>
</dbReference>
<dbReference type="GO" id="GO:0005576">
    <property type="term" value="C:extracellular region"/>
    <property type="evidence" value="ECO:0007669"/>
    <property type="project" value="UniProtKB-SubCell"/>
</dbReference>
<dbReference type="GO" id="GO:0019814">
    <property type="term" value="C:immunoglobulin complex"/>
    <property type="evidence" value="ECO:0007669"/>
    <property type="project" value="UniProtKB-KW"/>
</dbReference>
<dbReference type="GO" id="GO:0005886">
    <property type="term" value="C:plasma membrane"/>
    <property type="evidence" value="ECO:0007669"/>
    <property type="project" value="UniProtKB-SubCell"/>
</dbReference>
<dbReference type="GO" id="GO:0003823">
    <property type="term" value="F:antigen binding"/>
    <property type="evidence" value="ECO:0000318"/>
    <property type="project" value="GO_Central"/>
</dbReference>
<dbReference type="GO" id="GO:0016064">
    <property type="term" value="P:immunoglobulin mediated immune response"/>
    <property type="evidence" value="ECO:0000318"/>
    <property type="project" value="GO_Central"/>
</dbReference>
<dbReference type="FunFam" id="2.60.40.10:FF:001119">
    <property type="entry name" value="Immunoglobulin heavy variable 4-30-4"/>
    <property type="match status" value="1"/>
</dbReference>
<dbReference type="Gene3D" id="2.60.40.10">
    <property type="entry name" value="Immunoglobulins"/>
    <property type="match status" value="1"/>
</dbReference>
<dbReference type="InterPro" id="IPR007110">
    <property type="entry name" value="Ig-like_dom"/>
</dbReference>
<dbReference type="InterPro" id="IPR036179">
    <property type="entry name" value="Ig-like_dom_sf"/>
</dbReference>
<dbReference type="InterPro" id="IPR013783">
    <property type="entry name" value="Ig-like_fold"/>
</dbReference>
<dbReference type="InterPro" id="IPR013106">
    <property type="entry name" value="Ig_V-set"/>
</dbReference>
<dbReference type="InterPro" id="IPR050199">
    <property type="entry name" value="IgHV"/>
</dbReference>
<dbReference type="PANTHER" id="PTHR23266">
    <property type="entry name" value="IMMUNOGLOBULIN HEAVY CHAIN"/>
    <property type="match status" value="1"/>
</dbReference>
<dbReference type="Pfam" id="PF07686">
    <property type="entry name" value="V-set"/>
    <property type="match status" value="1"/>
</dbReference>
<dbReference type="SMART" id="SM00406">
    <property type="entry name" value="IGv"/>
    <property type="match status" value="1"/>
</dbReference>
<dbReference type="SUPFAM" id="SSF48726">
    <property type="entry name" value="Immunoglobulin"/>
    <property type="match status" value="1"/>
</dbReference>
<dbReference type="PROSITE" id="PS50835">
    <property type="entry name" value="IG_LIKE"/>
    <property type="match status" value="1"/>
</dbReference>
<reference key="1">
    <citation type="journal article" date="2003" name="Nature">
        <title>The DNA sequence and analysis of human chromosome 14.</title>
        <authorList>
            <person name="Heilig R."/>
            <person name="Eckenberg R."/>
            <person name="Petit J.-L."/>
            <person name="Fonknechten N."/>
            <person name="Da Silva C."/>
            <person name="Cattolico L."/>
            <person name="Levy M."/>
            <person name="Barbe V."/>
            <person name="De Berardinis V."/>
            <person name="Ureta-Vidal A."/>
            <person name="Pelletier E."/>
            <person name="Vico V."/>
            <person name="Anthouard V."/>
            <person name="Rowen L."/>
            <person name="Madan A."/>
            <person name="Qin S."/>
            <person name="Sun H."/>
            <person name="Du H."/>
            <person name="Pepin K."/>
            <person name="Artiguenave F."/>
            <person name="Robert C."/>
            <person name="Cruaud C."/>
            <person name="Bruels T."/>
            <person name="Jaillon O."/>
            <person name="Friedlander L."/>
            <person name="Samson G."/>
            <person name="Brottier P."/>
            <person name="Cure S."/>
            <person name="Segurens B."/>
            <person name="Aniere F."/>
            <person name="Samain S."/>
            <person name="Crespeau H."/>
            <person name="Abbasi N."/>
            <person name="Aiach N."/>
            <person name="Boscus D."/>
            <person name="Dickhoff R."/>
            <person name="Dors M."/>
            <person name="Dubois I."/>
            <person name="Friedman C."/>
            <person name="Gouyvenoux M."/>
            <person name="James R."/>
            <person name="Madan A."/>
            <person name="Mairey-Estrada B."/>
            <person name="Mangenot S."/>
            <person name="Martins N."/>
            <person name="Menard M."/>
            <person name="Oztas S."/>
            <person name="Ratcliffe A."/>
            <person name="Shaffer T."/>
            <person name="Trask B."/>
            <person name="Vacherie B."/>
            <person name="Bellemere C."/>
            <person name="Belser C."/>
            <person name="Besnard-Gonnet M."/>
            <person name="Bartol-Mavel D."/>
            <person name="Boutard M."/>
            <person name="Briez-Silla S."/>
            <person name="Combette S."/>
            <person name="Dufosse-Laurent V."/>
            <person name="Ferron C."/>
            <person name="Lechaplais C."/>
            <person name="Louesse C."/>
            <person name="Muselet D."/>
            <person name="Magdelenat G."/>
            <person name="Pateau E."/>
            <person name="Petit E."/>
            <person name="Sirvain-Trukniewicz P."/>
            <person name="Trybou A."/>
            <person name="Vega-Czarny N."/>
            <person name="Bataille E."/>
            <person name="Bluet E."/>
            <person name="Bordelais I."/>
            <person name="Dubois M."/>
            <person name="Dumont C."/>
            <person name="Guerin T."/>
            <person name="Haffray S."/>
            <person name="Hammadi R."/>
            <person name="Muanga J."/>
            <person name="Pellouin V."/>
            <person name="Robert D."/>
            <person name="Wunderle E."/>
            <person name="Gauguet G."/>
            <person name="Roy A."/>
            <person name="Sainte-Marthe L."/>
            <person name="Verdier J."/>
            <person name="Verdier-Discala C."/>
            <person name="Hillier L.W."/>
            <person name="Fulton L."/>
            <person name="McPherson J."/>
            <person name="Matsuda F."/>
            <person name="Wilson R."/>
            <person name="Scarpelli C."/>
            <person name="Gyapay G."/>
            <person name="Wincker P."/>
            <person name="Saurin W."/>
            <person name="Quetier F."/>
            <person name="Waterston R."/>
            <person name="Hood L."/>
            <person name="Weissenbach J."/>
        </authorList>
    </citation>
    <scope>NUCLEOTIDE SEQUENCE [LARGE SCALE GENOMIC DNA] (IMGT ALLELE IGHV4-28*07)</scope>
</reference>
<reference key="2">
    <citation type="journal article" date="2001" name="Exp. Clin. Immunogenet.">
        <title>Nomenclature of the human immunoglobulin heavy (IGH) genes.</title>
        <authorList>
            <person name="Lefranc M.P."/>
        </authorList>
    </citation>
    <scope>NOMENCLATURE</scope>
</reference>
<reference key="3">
    <citation type="book" date="2001" name="The Immunoglobulin FactsBook.">
        <title>The Immunoglobulin FactsBook.</title>
        <editorList>
            <person name="Lefranc M.P."/>
            <person name="Lefranc G."/>
        </editorList>
        <authorList>
            <person name="Lefranc M.P."/>
            <person name="Lefranc G."/>
        </authorList>
    </citation>
    <scope>NOMENCLATURE</scope>
</reference>
<reference key="4">
    <citation type="journal article" date="2007" name="Annu. Rev. Genet.">
        <title>Immunoglobulin somatic hypermutation.</title>
        <authorList>
            <person name="Teng G."/>
            <person name="Papavasiliou F.N."/>
        </authorList>
    </citation>
    <scope>REVIEW ON SOMATIC HYPERMUTATION</scope>
</reference>
<reference key="5">
    <citation type="journal article" date="2010" name="J. Allergy Clin. Immunol.">
        <title>Structure and function of immunoglobulins.</title>
        <authorList>
            <person name="Schroeder H.W. Jr."/>
            <person name="Cavacini L."/>
        </authorList>
    </citation>
    <scope>REVIEW ON IMMUNOGLOBULINS</scope>
</reference>
<reference key="6">
    <citation type="journal article" date="2012" name="Nat. Rev. Immunol.">
        <title>Molecular programming of B cell memory.</title>
        <authorList>
            <person name="McHeyzer-Williams M."/>
            <person name="Okitsu S."/>
            <person name="Wang N."/>
            <person name="McHeyzer-Williams L."/>
        </authorList>
    </citation>
    <scope>REVIEW ON FUNCTION</scope>
</reference>
<reference key="7">
    <citation type="journal article" date="2014" name="Front. Immunol.">
        <title>Immunoglobulin and T Cell Receptor Genes: IMGT((R)) and the Birth and Rise of Immunoinformatics.</title>
        <authorList>
            <person name="Lefranc M.P."/>
        </authorList>
    </citation>
    <scope>NOMENCLATURE</scope>
</reference>
<organism>
    <name type="scientific">Homo sapiens</name>
    <name type="common">Human</name>
    <dbReference type="NCBI Taxonomy" id="9606"/>
    <lineage>
        <taxon>Eukaryota</taxon>
        <taxon>Metazoa</taxon>
        <taxon>Chordata</taxon>
        <taxon>Craniata</taxon>
        <taxon>Vertebrata</taxon>
        <taxon>Euteleostomi</taxon>
        <taxon>Mammalia</taxon>
        <taxon>Eutheria</taxon>
        <taxon>Euarchontoglires</taxon>
        <taxon>Primates</taxon>
        <taxon>Haplorrhini</taxon>
        <taxon>Catarrhini</taxon>
        <taxon>Hominidae</taxon>
        <taxon>Homo</taxon>
    </lineage>
</organism>
<accession>A0A0C4DH34</accession>
<keyword id="KW-1064">Adaptive immunity</keyword>
<keyword id="KW-1003">Cell membrane</keyword>
<keyword id="KW-1015">Disulfide bond</keyword>
<keyword id="KW-0391">Immunity</keyword>
<keyword id="KW-1280">Immunoglobulin</keyword>
<keyword id="KW-0393">Immunoglobulin domain</keyword>
<keyword id="KW-0472">Membrane</keyword>
<keyword id="KW-1267">Proteomics identification</keyword>
<keyword id="KW-1185">Reference proteome</keyword>
<keyword id="KW-0964">Secreted</keyword>
<keyword id="KW-0732">Signal</keyword>
<feature type="signal peptide" evidence="2">
    <location>
        <begin position="1"/>
        <end position="19"/>
    </location>
</feature>
<feature type="chain" id="PRO_5007392170" description="Immunoglobulin heavy variable 4-28" evidence="2">
    <location>
        <begin position="20"/>
        <end position="117"/>
    </location>
</feature>
<feature type="domain" description="Ig-like" evidence="3">
    <location>
        <begin position="20"/>
        <end position="117" status="greater than"/>
    </location>
</feature>
<feature type="region of interest" description="Framework-1" evidence="1">
    <location>
        <begin position="20"/>
        <end position="44"/>
    </location>
</feature>
<feature type="region of interest" description="Complementarity-determining-1" evidence="1">
    <location>
        <begin position="45"/>
        <end position="53"/>
    </location>
</feature>
<feature type="region of interest" description="Framework-2" evidence="1">
    <location>
        <begin position="54"/>
        <end position="70"/>
    </location>
</feature>
<feature type="region of interest" description="Complementarity-determining-2" evidence="1">
    <location>
        <begin position="71"/>
        <end position="77"/>
    </location>
</feature>
<feature type="region of interest" description="Framework-3" evidence="1">
    <location>
        <begin position="78"/>
        <end position="115"/>
    </location>
</feature>
<feature type="region of interest" description="Complementarity-determining-3" evidence="1">
    <location>
        <begin position="116"/>
        <end position="117" status="greater than"/>
    </location>
</feature>
<feature type="disulfide bond" evidence="3">
    <location>
        <begin position="41"/>
        <end position="115"/>
    </location>
</feature>
<feature type="non-terminal residue">
    <location>
        <position position="117"/>
    </location>
</feature>
<gene>
    <name evidence="4 9" type="primary">IGHV4-28</name>
</gene>
<sequence>MKHLWFFLLLVAAPRWVLSQVQLQESGPGLVKPSDTLSLTCAVSGYSISSSNWWGWIRQPPGKGLEWIGYIYYSGSTYYNPSLKSRVTMSVDTSKNQFSLKLSSVTAVDTAVYYCAR</sequence>
<evidence type="ECO:0000250" key="1">
    <source>
        <dbReference type="UniProtKB" id="P23083"/>
    </source>
</evidence>
<evidence type="ECO:0000255" key="2"/>
<evidence type="ECO:0000255" key="3">
    <source>
        <dbReference type="PROSITE-ProRule" id="PRU00114"/>
    </source>
</evidence>
<evidence type="ECO:0000303" key="4">
    <source>
    </source>
</evidence>
<evidence type="ECO:0000303" key="5">
    <source>
    </source>
</evidence>
<evidence type="ECO:0000303" key="6">
    <source>
    </source>
</evidence>
<evidence type="ECO:0000303" key="7">
    <source>
    </source>
</evidence>
<evidence type="ECO:0000303" key="8">
    <source>
    </source>
</evidence>
<evidence type="ECO:0000303" key="9">
    <source ref="3"/>
</evidence>
<evidence type="ECO:0000305" key="10"/>
<proteinExistence type="evidence at protein level"/>
<name>HV428_HUMAN</name>
<comment type="function">
    <text evidence="5 6 7 8">V region of the variable domain of immunoglobulin heavy chains that participates in the antigen recognition (PubMed:24600447). Immunoglobulins, also known as antibodies, are membrane-bound or secreted glycoproteins produced by B lymphocytes. In the recognition phase of humoral immunity, the membrane-bound immunoglobulins serve as receptors which, upon binding of a specific antigen, trigger the clonal expansion and differentiation of B lymphocytes into immunoglobulins-secreting plasma cells. Secreted immunoglobulins mediate the effector phase of humoral immunity, which results in the elimination of bound antigens (PubMed:20176268, PubMed:22158414). The antigen binding site is formed by the variable domain of one heavy chain, together with that of its associated light chain. Thus, each immunoglobulin has two antigen binding sites with remarkable affinity for a particular antigen. The variable domains are assembled by a process called V-(D)-J rearrangement and can then be subjected to somatic hypermutations which, after exposure to antigen and selection, allow affinity maturation for a particular antigen (PubMed:17576170, PubMed:20176268).</text>
</comment>
<comment type="subunit">
    <text evidence="6">Immunoglobulins are composed of two identical heavy chains and two identical light chains; disulfide-linked.</text>
</comment>
<comment type="subcellular location">
    <subcellularLocation>
        <location evidence="6 7">Secreted</location>
    </subcellularLocation>
    <subcellularLocation>
        <location evidence="6 7">Cell membrane</location>
    </subcellularLocation>
</comment>
<comment type="polymorphism">
    <text evidence="10">There are several alleles. The sequence shown is that of IMGT allele IGHV4-28*07.</text>
</comment>
<comment type="caution">
    <text evidence="10">For examples of full-length immunoglobulin heavy chains (of different isotypes) see AC P0DOX2, AC P0DOX3, AC P0DOX4, AC P0DOX5 and AC P0DOX6.</text>
</comment>
<protein>
    <recommendedName>
        <fullName evidence="4 9">Immunoglobulin heavy variable 4-28</fullName>
    </recommendedName>
</protein>